<sequence>MEKAIRDRVEKWKKEHTIDGKDATNEHAYESLNELILDGKKLTSIKNEEKELLKNFKNLERLCLNQTGIQTLENIPSIATLNVLELTDNHLSSVEVLKYIVQNFPNIKTLEIGGNHFKNINDFETLKELKNLVRLGVQFNPFADNPNYRKELFEFLPNVKIIDCYNKEGMEVLSSDEEEEEEYEEDNTLKNFYEADFKDEDDEDEEFVPNDNEDDDEDDELDDDLEDEDMEDLDKEDLDKEDYDIDTKETEGVNKDEKSNKRKQDALDNTNDMDLKKTKLE</sequence>
<name>AN32_PLAF7</name>
<evidence type="ECO:0000255" key="1"/>
<evidence type="ECO:0000256" key="2">
    <source>
        <dbReference type="SAM" id="MobiDB-lite"/>
    </source>
</evidence>
<evidence type="ECO:0000305" key="3"/>
<accession>Q8ILI6</accession>
<accession>A0A144A431</accession>
<feature type="chain" id="PRO_0000240196" description="Acidic leucine-rich nuclear phosphoprotein 32-related protein">
    <location>
        <begin position="1"/>
        <end position="281"/>
    </location>
</feature>
<feature type="repeat" description="LRR 1" evidence="1">
    <location>
        <begin position="29"/>
        <end position="52"/>
    </location>
</feature>
<feature type="repeat" description="LRR 2" evidence="1">
    <location>
        <begin position="56"/>
        <end position="78"/>
    </location>
</feature>
<feature type="repeat" description="LRR 3" evidence="1">
    <location>
        <begin position="79"/>
        <end position="103"/>
    </location>
</feature>
<feature type="repeat" description="LRR 4" evidence="1">
    <location>
        <begin position="105"/>
        <end position="128"/>
    </location>
</feature>
<feature type="domain" description="LRRCT">
    <location>
        <begin position="140"/>
        <end position="178"/>
    </location>
</feature>
<feature type="region of interest" description="Disordered" evidence="2">
    <location>
        <begin position="197"/>
        <end position="281"/>
    </location>
</feature>
<feature type="compositionally biased region" description="Acidic residues" evidence="2">
    <location>
        <begin position="197"/>
        <end position="244"/>
    </location>
</feature>
<feature type="compositionally biased region" description="Basic and acidic residues" evidence="2">
    <location>
        <begin position="245"/>
        <end position="266"/>
    </location>
</feature>
<comment type="similarity">
    <text evidence="3">Belongs to the ANP32 family.</text>
</comment>
<reference key="1">
    <citation type="journal article" date="2002" name="Nature">
        <title>Genome sequence of the human malaria parasite Plasmodium falciparum.</title>
        <authorList>
            <person name="Gardner M.J."/>
            <person name="Hall N."/>
            <person name="Fung E."/>
            <person name="White O."/>
            <person name="Berriman M."/>
            <person name="Hyman R.W."/>
            <person name="Carlton J.M."/>
            <person name="Pain A."/>
            <person name="Nelson K.E."/>
            <person name="Bowman S."/>
            <person name="Paulsen I.T."/>
            <person name="James K.D."/>
            <person name="Eisen J.A."/>
            <person name="Rutherford K.M."/>
            <person name="Salzberg S.L."/>
            <person name="Craig A."/>
            <person name="Kyes S."/>
            <person name="Chan M.-S."/>
            <person name="Nene V."/>
            <person name="Shallom S.J."/>
            <person name="Suh B."/>
            <person name="Peterson J."/>
            <person name="Angiuoli S."/>
            <person name="Pertea M."/>
            <person name="Allen J."/>
            <person name="Selengut J."/>
            <person name="Haft D."/>
            <person name="Mather M.W."/>
            <person name="Vaidya A.B."/>
            <person name="Martin D.M.A."/>
            <person name="Fairlamb A.H."/>
            <person name="Fraunholz M.J."/>
            <person name="Roos D.S."/>
            <person name="Ralph S.A."/>
            <person name="McFadden G.I."/>
            <person name="Cummings L.M."/>
            <person name="Subramanian G.M."/>
            <person name="Mungall C."/>
            <person name="Venter J.C."/>
            <person name="Carucci D.J."/>
            <person name="Hoffman S.L."/>
            <person name="Newbold C."/>
            <person name="Davis R.W."/>
            <person name="Fraser C.M."/>
            <person name="Barrell B.G."/>
        </authorList>
    </citation>
    <scope>NUCLEOTIDE SEQUENCE [LARGE SCALE GENOMIC DNA]</scope>
    <source>
        <strain>3D7</strain>
    </source>
</reference>
<reference key="2">
    <citation type="journal article" date="2005" name="Cerebellum">
        <title>The Anp32 family of proteins containing leucine-rich repeats.</title>
        <authorList>
            <person name="Matilla A."/>
            <person name="Radrizzani M."/>
        </authorList>
    </citation>
    <scope>GENE FAMILY</scope>
    <scope>NOMENCLATURE</scope>
</reference>
<dbReference type="EMBL" id="LN999946">
    <property type="protein sequence ID" value="CZT99975.1"/>
    <property type="molecule type" value="Genomic_DNA"/>
</dbReference>
<dbReference type="RefSeq" id="XP_001348431.1">
    <property type="nucleotide sequence ID" value="XM_001348395.1"/>
</dbReference>
<dbReference type="SMR" id="Q8ILI6"/>
<dbReference type="BioGRID" id="1207201">
    <property type="interactions" value="5"/>
</dbReference>
<dbReference type="FunCoup" id="Q8ILI6">
    <property type="interactions" value="159"/>
</dbReference>
<dbReference type="IntAct" id="Q8ILI6">
    <property type="interactions" value="5"/>
</dbReference>
<dbReference type="STRING" id="36329.Q8ILI6"/>
<dbReference type="PaxDb" id="5833-PF14_0257"/>
<dbReference type="EnsemblProtists" id="CZT99975">
    <property type="protein sequence ID" value="CZT99975"/>
    <property type="gene ID" value="PF3D7_1427900"/>
</dbReference>
<dbReference type="GeneID" id="811839"/>
<dbReference type="KEGG" id="pfa:PF3D7_1427900"/>
<dbReference type="VEuPathDB" id="PlasmoDB:PF3D7_1427900"/>
<dbReference type="HOGENOM" id="CLU_1006375_0_0_1"/>
<dbReference type="InParanoid" id="Q8ILI6"/>
<dbReference type="OMA" id="VTNENAY"/>
<dbReference type="OrthoDB" id="2160613at2759"/>
<dbReference type="PhylomeDB" id="Q8ILI6"/>
<dbReference type="Proteomes" id="UP000001450">
    <property type="component" value="Chromosome 14"/>
</dbReference>
<dbReference type="GO" id="GO:0005634">
    <property type="term" value="C:nucleus"/>
    <property type="evidence" value="ECO:0000318"/>
    <property type="project" value="GO_Central"/>
</dbReference>
<dbReference type="GO" id="GO:0042393">
    <property type="term" value="F:histone binding"/>
    <property type="evidence" value="ECO:0000318"/>
    <property type="project" value="GO_Central"/>
</dbReference>
<dbReference type="FunFam" id="3.80.10.10:FF:000554">
    <property type="entry name" value="Acidic leucine-rich nuclear phosphoprotein 32-related protein"/>
    <property type="match status" value="1"/>
</dbReference>
<dbReference type="Gene3D" id="3.80.10.10">
    <property type="entry name" value="Ribonuclease Inhibitor"/>
    <property type="match status" value="1"/>
</dbReference>
<dbReference type="InterPro" id="IPR045081">
    <property type="entry name" value="AN32"/>
</dbReference>
<dbReference type="InterPro" id="IPR032675">
    <property type="entry name" value="LRR_dom_sf"/>
</dbReference>
<dbReference type="PANTHER" id="PTHR11375">
    <property type="entry name" value="ACIDIC LEUCINE-RICH NUCLEAR PHOSPHOPROTEIN 32"/>
    <property type="match status" value="1"/>
</dbReference>
<dbReference type="PANTHER" id="PTHR11375:SF0">
    <property type="entry name" value="ACIDIC LEUCINE-RICH NUCLEAR PHOSPHOPROTEIN 32 FAMILY MEMBER A"/>
    <property type="match status" value="1"/>
</dbReference>
<dbReference type="Pfam" id="PF14580">
    <property type="entry name" value="LRR_9"/>
    <property type="match status" value="1"/>
</dbReference>
<dbReference type="SUPFAM" id="SSF52058">
    <property type="entry name" value="L domain-like"/>
    <property type="match status" value="1"/>
</dbReference>
<gene>
    <name type="ORF">PF14_0257</name>
    <name type="ORF">PF3D7_1427900</name>
</gene>
<protein>
    <recommendedName>
        <fullName>Acidic leucine-rich nuclear phosphoprotein 32-related protein</fullName>
    </recommendedName>
    <alternativeName>
        <fullName>ANP32/acidic nuclear phosphoprotein-like protein</fullName>
    </alternativeName>
</protein>
<keyword id="KW-0433">Leucine-rich repeat</keyword>
<keyword id="KW-1185">Reference proteome</keyword>
<keyword id="KW-0677">Repeat</keyword>
<organism>
    <name type="scientific">Plasmodium falciparum (isolate 3D7)</name>
    <dbReference type="NCBI Taxonomy" id="36329"/>
    <lineage>
        <taxon>Eukaryota</taxon>
        <taxon>Sar</taxon>
        <taxon>Alveolata</taxon>
        <taxon>Apicomplexa</taxon>
        <taxon>Aconoidasida</taxon>
        <taxon>Haemosporida</taxon>
        <taxon>Plasmodiidae</taxon>
        <taxon>Plasmodium</taxon>
        <taxon>Plasmodium (Laverania)</taxon>
    </lineage>
</organism>
<proteinExistence type="inferred from homology"/>